<name>AGLA_RHIME</name>
<accession>Q9Z3R8</accession>
<gene>
    <name type="primary">aglA</name>
    <name type="ordered locus">R00698</name>
    <name type="ORF">SMc03064</name>
</gene>
<proteinExistence type="inferred from homology"/>
<comment type="catalytic activity">
    <reaction>
        <text>Hydrolysis of terminal, non-reducing (1-&gt;4)-linked alpha-D-glucose residues with release of alpha-D-glucose.</text>
        <dbReference type="EC" id="3.2.1.20"/>
    </reaction>
</comment>
<comment type="similarity">
    <text evidence="2">Belongs to the glycosyl hydrolase 13 family.</text>
</comment>
<dbReference type="EC" id="3.2.1.20"/>
<dbReference type="EMBL" id="AF045609">
    <property type="protein sequence ID" value="AAD12047.1"/>
    <property type="molecule type" value="Genomic_DNA"/>
</dbReference>
<dbReference type="EMBL" id="AL591688">
    <property type="protein sequence ID" value="CAC45270.1"/>
    <property type="molecule type" value="Genomic_DNA"/>
</dbReference>
<dbReference type="RefSeq" id="NP_384804.1">
    <property type="nucleotide sequence ID" value="NC_003047.1"/>
</dbReference>
<dbReference type="SMR" id="Q9Z3R8"/>
<dbReference type="CAZy" id="GH13">
    <property type="family name" value="Glycoside Hydrolase Family 13"/>
</dbReference>
<dbReference type="EnsemblBacteria" id="CAC45270">
    <property type="protein sequence ID" value="CAC45270"/>
    <property type="gene ID" value="SMc03064"/>
</dbReference>
<dbReference type="KEGG" id="sme:SMc03064"/>
<dbReference type="PATRIC" id="fig|266834.11.peg.2073"/>
<dbReference type="eggNOG" id="COG0366">
    <property type="taxonomic scope" value="Bacteria"/>
</dbReference>
<dbReference type="HOGENOM" id="CLU_006462_2_3_5"/>
<dbReference type="OrthoDB" id="9805159at2"/>
<dbReference type="BRENDA" id="3.2.1.20">
    <property type="organism ID" value="5347"/>
</dbReference>
<dbReference type="Proteomes" id="UP000001976">
    <property type="component" value="Chromosome"/>
</dbReference>
<dbReference type="GO" id="GO:0004558">
    <property type="term" value="F:alpha-1,4-glucosidase activity"/>
    <property type="evidence" value="ECO:0007669"/>
    <property type="project" value="UniProtKB-EC"/>
</dbReference>
<dbReference type="GO" id="GO:0004556">
    <property type="term" value="F:alpha-amylase activity"/>
    <property type="evidence" value="ECO:0007669"/>
    <property type="project" value="TreeGrafter"/>
</dbReference>
<dbReference type="GO" id="GO:0009313">
    <property type="term" value="P:oligosaccharide catabolic process"/>
    <property type="evidence" value="ECO:0007669"/>
    <property type="project" value="TreeGrafter"/>
</dbReference>
<dbReference type="CDD" id="cd11330">
    <property type="entry name" value="AmyAc_OligoGlu"/>
    <property type="match status" value="1"/>
</dbReference>
<dbReference type="FunFam" id="3.90.400.10:FF:000002">
    <property type="entry name" value="Sucrose isomerase"/>
    <property type="match status" value="1"/>
</dbReference>
<dbReference type="Gene3D" id="3.20.20.80">
    <property type="entry name" value="Glycosidases"/>
    <property type="match status" value="2"/>
</dbReference>
<dbReference type="Gene3D" id="2.60.40.1180">
    <property type="entry name" value="Golgi alpha-mannosidase II"/>
    <property type="match status" value="1"/>
</dbReference>
<dbReference type="Gene3D" id="3.90.400.10">
    <property type="entry name" value="Oligo-1,6-glucosidase, Domain 2"/>
    <property type="match status" value="1"/>
</dbReference>
<dbReference type="InterPro" id="IPR006047">
    <property type="entry name" value="Glyco_hydro_13_cat_dom"/>
</dbReference>
<dbReference type="InterPro" id="IPR013780">
    <property type="entry name" value="Glyco_hydro_b"/>
</dbReference>
<dbReference type="InterPro" id="IPR017853">
    <property type="entry name" value="Glycoside_hydrolase_SF"/>
</dbReference>
<dbReference type="InterPro" id="IPR045857">
    <property type="entry name" value="O16G_dom_2"/>
</dbReference>
<dbReference type="PANTHER" id="PTHR10357">
    <property type="entry name" value="ALPHA-AMYLASE FAMILY MEMBER"/>
    <property type="match status" value="1"/>
</dbReference>
<dbReference type="PANTHER" id="PTHR10357:SF179">
    <property type="entry name" value="NEUTRAL AND BASIC AMINO ACID TRANSPORT PROTEIN RBAT"/>
    <property type="match status" value="1"/>
</dbReference>
<dbReference type="Pfam" id="PF00128">
    <property type="entry name" value="Alpha-amylase"/>
    <property type="match status" value="1"/>
</dbReference>
<dbReference type="SMART" id="SM00642">
    <property type="entry name" value="Aamy"/>
    <property type="match status" value="1"/>
</dbReference>
<dbReference type="SUPFAM" id="SSF51445">
    <property type="entry name" value="(Trans)glycosidases"/>
    <property type="match status" value="1"/>
</dbReference>
<dbReference type="SUPFAM" id="SSF51011">
    <property type="entry name" value="Glycosyl hydrolase domain"/>
    <property type="match status" value="1"/>
</dbReference>
<protein>
    <recommendedName>
        <fullName>Probable alpha-glucosidase</fullName>
        <ecNumber>3.2.1.20</ecNumber>
    </recommendedName>
</protein>
<keyword id="KW-0326">Glycosidase</keyword>
<keyword id="KW-0378">Hydrolase</keyword>
<keyword id="KW-1185">Reference proteome</keyword>
<feature type="chain" id="PRO_0000054312" description="Probable alpha-glucosidase">
    <location>
        <begin position="1"/>
        <end position="551"/>
    </location>
</feature>
<feature type="active site" description="Nucleophile" evidence="1">
    <location>
        <position position="212"/>
    </location>
</feature>
<feature type="active site" description="Proton donor" evidence="1">
    <location>
        <position position="272"/>
    </location>
</feature>
<feature type="site" description="Transition state stabilizer" evidence="1">
    <location>
        <position position="345"/>
    </location>
</feature>
<feature type="sequence conflict" description="In Ref. 1; AAD12047." evidence="2" ref="1">
    <original>P</original>
    <variation>A</variation>
    <location>
        <position position="13"/>
    </location>
</feature>
<feature type="sequence conflict" description="In Ref. 1; AAD12047." evidence="2" ref="1">
    <original>GA</original>
    <variation>RP</variation>
    <location>
        <begin position="20"/>
        <end position="21"/>
    </location>
</feature>
<feature type="sequence conflict" description="In Ref. 1." evidence="2" ref="1">
    <original>YGIQFWPDFKGRDG</original>
    <variation>MASSSGPTSSAGR</variation>
    <location>
        <begin position="402"/>
        <end position="415"/>
    </location>
</feature>
<feature type="sequence conflict" description="In Ref. 1; AAD12047." evidence="2" ref="1">
    <original>PRAVAVQEGDPASVLH</original>
    <variation>RGRCRAGGRPGLGAA</variation>
    <location>
        <begin position="445"/>
        <end position="460"/>
    </location>
</feature>
<evidence type="ECO:0000250" key="1"/>
<evidence type="ECO:0000305" key="2"/>
<reference key="1">
    <citation type="journal article" date="1999" name="J. Bacteriol.">
        <title>A novel Sinorhizobium meliloti operon encodes an alpha-glucosidase and a periplasmic-binding-protein-dependent transport system for alpha-glucosides.</title>
        <authorList>
            <person name="Willis L.B."/>
            <person name="Walker G.C."/>
        </authorList>
    </citation>
    <scope>NUCLEOTIDE SEQUENCE [GENOMIC DNA]</scope>
</reference>
<reference key="2">
    <citation type="journal article" date="2001" name="Proc. Natl. Acad. Sci. U.S.A.">
        <title>Analysis of the chromosome sequence of the legume symbiont Sinorhizobium meliloti strain 1021.</title>
        <authorList>
            <person name="Capela D."/>
            <person name="Barloy-Hubler F."/>
            <person name="Gouzy J."/>
            <person name="Bothe G."/>
            <person name="Ampe F."/>
            <person name="Batut J."/>
            <person name="Boistard P."/>
            <person name="Becker A."/>
            <person name="Boutry M."/>
            <person name="Cadieu E."/>
            <person name="Dreano S."/>
            <person name="Gloux S."/>
            <person name="Godrie T."/>
            <person name="Goffeau A."/>
            <person name="Kahn D."/>
            <person name="Kiss E."/>
            <person name="Lelaure V."/>
            <person name="Masuy D."/>
            <person name="Pohl T."/>
            <person name="Portetelle D."/>
            <person name="Puehler A."/>
            <person name="Purnelle B."/>
            <person name="Ramsperger U."/>
            <person name="Renard C."/>
            <person name="Thebault P."/>
            <person name="Vandenbol M."/>
            <person name="Weidner S."/>
            <person name="Galibert F."/>
        </authorList>
    </citation>
    <scope>NUCLEOTIDE SEQUENCE [LARGE SCALE GENOMIC DNA]</scope>
    <source>
        <strain>1021</strain>
    </source>
</reference>
<reference key="3">
    <citation type="journal article" date="2001" name="Science">
        <title>The composite genome of the legume symbiont Sinorhizobium meliloti.</title>
        <authorList>
            <person name="Galibert F."/>
            <person name="Finan T.M."/>
            <person name="Long S.R."/>
            <person name="Puehler A."/>
            <person name="Abola P."/>
            <person name="Ampe F."/>
            <person name="Barloy-Hubler F."/>
            <person name="Barnett M.J."/>
            <person name="Becker A."/>
            <person name="Boistard P."/>
            <person name="Bothe G."/>
            <person name="Boutry M."/>
            <person name="Bowser L."/>
            <person name="Buhrmester J."/>
            <person name="Cadieu E."/>
            <person name="Capela D."/>
            <person name="Chain P."/>
            <person name="Cowie A."/>
            <person name="Davis R.W."/>
            <person name="Dreano S."/>
            <person name="Federspiel N.A."/>
            <person name="Fisher R.F."/>
            <person name="Gloux S."/>
            <person name="Godrie T."/>
            <person name="Goffeau A."/>
            <person name="Golding B."/>
            <person name="Gouzy J."/>
            <person name="Gurjal M."/>
            <person name="Hernandez-Lucas I."/>
            <person name="Hong A."/>
            <person name="Huizar L."/>
            <person name="Hyman R.W."/>
            <person name="Jones T."/>
            <person name="Kahn D."/>
            <person name="Kahn M.L."/>
            <person name="Kalman S."/>
            <person name="Keating D.H."/>
            <person name="Kiss E."/>
            <person name="Komp C."/>
            <person name="Lelaure V."/>
            <person name="Masuy D."/>
            <person name="Palm C."/>
            <person name="Peck M.C."/>
            <person name="Pohl T.M."/>
            <person name="Portetelle D."/>
            <person name="Purnelle B."/>
            <person name="Ramsperger U."/>
            <person name="Surzycki R."/>
            <person name="Thebault P."/>
            <person name="Vandenbol M."/>
            <person name="Vorhoelter F.J."/>
            <person name="Weidner S."/>
            <person name="Wells D.H."/>
            <person name="Wong K."/>
            <person name="Yeh K.-C."/>
            <person name="Batut J."/>
        </authorList>
    </citation>
    <scope>NUCLEOTIDE SEQUENCE [LARGE SCALE GENOMIC DNA]</scope>
    <source>
        <strain>1021</strain>
    </source>
</reference>
<organism>
    <name type="scientific">Rhizobium meliloti (strain 1021)</name>
    <name type="common">Ensifer meliloti</name>
    <name type="synonym">Sinorhizobium meliloti</name>
    <dbReference type="NCBI Taxonomy" id="266834"/>
    <lineage>
        <taxon>Bacteria</taxon>
        <taxon>Pseudomonadati</taxon>
        <taxon>Pseudomonadota</taxon>
        <taxon>Alphaproteobacteria</taxon>
        <taxon>Hyphomicrobiales</taxon>
        <taxon>Rhizobiaceae</taxon>
        <taxon>Sinorhizobium/Ensifer group</taxon>
        <taxon>Sinorhizobium</taxon>
    </lineage>
</organism>
<sequence>MTMNETTSSLLEPDRDWWRGAVIYQIYPRSFQDTNGDGIGDLQGITARLPHIAGLGADAIWISPFFTSPMRDFGYDVSNYVDVDPIFGTLEDFDALIAEAHRLGLRVMIDLVLSHTSDRHPWFVESRSSRSNAKADWYVWADSKPDGTPPNNWLSIFGGSAWQWDPTRLQYYLHNFLTSQPDLNLHNPQVQEALLAVERFWLERGVDGFRLDTINFYFHDRELRDNPALVPERRNASTAPAVNPYNYQEHIYDKNRPENLEFLKRFRAVMDEFPAIAAVGEVGDSQRGLEIAGEYTSGGDKVHMCYAFEFLAPDRLTPQRVAEVLRDFHRAAPEGWACWAFSNHDVVRHVSRWADGVTDHDAHAKLLASLLMSLRGTVCIYQGEELALAEAELDYEDLQDPYGIQFWPDFKGRDGCRTPMVWESLPDGGFSSATPWLPISQSHIPRAVAVQEGDPASVLHHYRRFLAFRKANPALAKGEIEFVETRGSLLGFLRSHGNEKVFCLFNMSDEAATKELPMKRLEPLEGHGFVSEILDHEVKLPAWGAFFARLA</sequence>